<keyword id="KW-0002">3D-structure</keyword>
<keyword id="KW-0456">Lyase</keyword>
<keyword id="KW-0816">Tricarboxylic acid cycle</keyword>
<organism>
    <name type="scientific">Salmonella typhi</name>
    <dbReference type="NCBI Taxonomy" id="90370"/>
    <lineage>
        <taxon>Bacteria</taxon>
        <taxon>Pseudomonadati</taxon>
        <taxon>Pseudomonadota</taxon>
        <taxon>Gammaproteobacteria</taxon>
        <taxon>Enterobacterales</taxon>
        <taxon>Enterobacteriaceae</taxon>
        <taxon>Salmonella</taxon>
    </lineage>
</organism>
<reference key="1">
    <citation type="journal article" date="2001" name="Nature">
        <title>Complete genome sequence of a multiple drug resistant Salmonella enterica serovar Typhi CT18.</title>
        <authorList>
            <person name="Parkhill J."/>
            <person name="Dougan G."/>
            <person name="James K.D."/>
            <person name="Thomson N.R."/>
            <person name="Pickard D."/>
            <person name="Wain J."/>
            <person name="Churcher C.M."/>
            <person name="Mungall K.L."/>
            <person name="Bentley S.D."/>
            <person name="Holden M.T.G."/>
            <person name="Sebaihia M."/>
            <person name="Baker S."/>
            <person name="Basham D."/>
            <person name="Brooks K."/>
            <person name="Chillingworth T."/>
            <person name="Connerton P."/>
            <person name="Cronin A."/>
            <person name="Davis P."/>
            <person name="Davies R.M."/>
            <person name="Dowd L."/>
            <person name="White N."/>
            <person name="Farrar J."/>
            <person name="Feltwell T."/>
            <person name="Hamlin N."/>
            <person name="Haque A."/>
            <person name="Hien T.T."/>
            <person name="Holroyd S."/>
            <person name="Jagels K."/>
            <person name="Krogh A."/>
            <person name="Larsen T.S."/>
            <person name="Leather S."/>
            <person name="Moule S."/>
            <person name="O'Gaora P."/>
            <person name="Parry C."/>
            <person name="Quail M.A."/>
            <person name="Rutherford K.M."/>
            <person name="Simmonds M."/>
            <person name="Skelton J."/>
            <person name="Stevens K."/>
            <person name="Whitehead S."/>
            <person name="Barrell B.G."/>
        </authorList>
    </citation>
    <scope>NUCLEOTIDE SEQUENCE [LARGE SCALE GENOMIC DNA]</scope>
    <source>
        <strain>CT18</strain>
    </source>
</reference>
<reference key="2">
    <citation type="journal article" date="2003" name="J. Bacteriol.">
        <title>Comparative genomics of Salmonella enterica serovar Typhi strains Ty2 and CT18.</title>
        <authorList>
            <person name="Deng W."/>
            <person name="Liou S.-R."/>
            <person name="Plunkett G. III"/>
            <person name="Mayhew G.F."/>
            <person name="Rose D.J."/>
            <person name="Burland V."/>
            <person name="Kodoyianni V."/>
            <person name="Schwartz D.C."/>
            <person name="Blattner F.R."/>
        </authorList>
    </citation>
    <scope>NUCLEOTIDE SEQUENCE [LARGE SCALE GENOMIC DNA]</scope>
    <source>
        <strain>ATCC 700931 / Ty2</strain>
    </source>
</reference>
<gene>
    <name type="primary">prpD</name>
    <name type="ordered locus">STY0402</name>
    <name type="ordered locus">t2494</name>
</gene>
<comment type="function">
    <text evidence="1">Involved in the catabolism of short chain fatty acids (SCFA) via the tricarboxylic acid (TCA)(acetyl degradation route) and via the 2-methylcitrate cycle I (propionate degradation route). Catalyzes the dehydration of 2-methylcitrate (2-MC) to yield the cis isomer of 2-methyl-aconitate. Could also catalyze the dehydration of citrate and the hydration of cis-aconitate.</text>
</comment>
<comment type="catalytic activity">
    <reaction evidence="1">
        <text>(2S,3S)-2-methylcitrate = 2-methyl-cis-aconitate + H2O</text>
        <dbReference type="Rhea" id="RHEA:17725"/>
        <dbReference type="ChEBI" id="CHEBI:15377"/>
        <dbReference type="ChEBI" id="CHEBI:57872"/>
        <dbReference type="ChEBI" id="CHEBI:58853"/>
        <dbReference type="EC" id="4.2.1.79"/>
    </reaction>
</comment>
<comment type="catalytic activity">
    <reaction evidence="1">
        <text>citrate = D-threo-isocitrate</text>
        <dbReference type="Rhea" id="RHEA:10336"/>
        <dbReference type="ChEBI" id="CHEBI:15562"/>
        <dbReference type="ChEBI" id="CHEBI:16947"/>
        <dbReference type="EC" id="4.2.1.3"/>
    </reaction>
</comment>
<comment type="pathway">
    <text evidence="1">Organic acid metabolism; propanoate degradation.</text>
</comment>
<comment type="pathway">
    <text evidence="1">Carbohydrate metabolism; tricarboxylic acid cycle; isocitrate from oxaloacetate: step 2/2.</text>
</comment>
<comment type="subunit">
    <text evidence="2">Monomer.</text>
</comment>
<comment type="similarity">
    <text evidence="3">Belongs to the PrpD family.</text>
</comment>
<accession>Q8Z903</accession>
<proteinExistence type="evidence at protein level"/>
<dbReference type="EC" id="4.2.1.79" evidence="1"/>
<dbReference type="EC" id="4.2.1.3" evidence="1"/>
<dbReference type="EMBL" id="AL513382">
    <property type="protein sequence ID" value="CAD08825.1"/>
    <property type="molecule type" value="Genomic_DNA"/>
</dbReference>
<dbReference type="EMBL" id="AE014613">
    <property type="protein sequence ID" value="AAO70082.1"/>
    <property type="molecule type" value="Genomic_DNA"/>
</dbReference>
<dbReference type="RefSeq" id="NP_454965.1">
    <property type="nucleotide sequence ID" value="NC_003198.1"/>
</dbReference>
<dbReference type="RefSeq" id="WP_001272709.1">
    <property type="nucleotide sequence ID" value="NZ_CJUM01000013.1"/>
</dbReference>
<dbReference type="PDB" id="5MVI">
    <property type="method" value="X-ray"/>
    <property type="resolution" value="3.05 A"/>
    <property type="chains" value="A/B/C/D/E/F=1-483"/>
</dbReference>
<dbReference type="PDBsum" id="5MVI"/>
<dbReference type="SMR" id="Q8Z903"/>
<dbReference type="STRING" id="220341.gene:17584430"/>
<dbReference type="KEGG" id="stt:t2494"/>
<dbReference type="KEGG" id="sty:STY0402"/>
<dbReference type="PATRIC" id="fig|220341.7.peg.398"/>
<dbReference type="eggNOG" id="COG2079">
    <property type="taxonomic scope" value="Bacteria"/>
</dbReference>
<dbReference type="HOGENOM" id="CLU_021803_1_0_6"/>
<dbReference type="OMA" id="DHSVMYI"/>
<dbReference type="UniPathway" id="UPA00223">
    <property type="reaction ID" value="UER00718"/>
</dbReference>
<dbReference type="UniPathway" id="UPA00946"/>
<dbReference type="Proteomes" id="UP000000541">
    <property type="component" value="Chromosome"/>
</dbReference>
<dbReference type="Proteomes" id="UP000002670">
    <property type="component" value="Chromosome"/>
</dbReference>
<dbReference type="GO" id="GO:0051537">
    <property type="term" value="F:2 iron, 2 sulfur cluster binding"/>
    <property type="evidence" value="ECO:0007669"/>
    <property type="project" value="InterPro"/>
</dbReference>
<dbReference type="GO" id="GO:0047547">
    <property type="term" value="F:2-methylcitrate dehydratase activity"/>
    <property type="evidence" value="ECO:0000250"/>
    <property type="project" value="UniProtKB"/>
</dbReference>
<dbReference type="GO" id="GO:0003994">
    <property type="term" value="F:aconitate hydratase activity"/>
    <property type="evidence" value="ECO:0007669"/>
    <property type="project" value="UniProtKB-EC"/>
</dbReference>
<dbReference type="GO" id="GO:0019629">
    <property type="term" value="P:propionate catabolic process, 2-methylcitrate cycle"/>
    <property type="evidence" value="ECO:0000250"/>
    <property type="project" value="UniProtKB"/>
</dbReference>
<dbReference type="GO" id="GO:0019679">
    <property type="term" value="P:propionate metabolic process, methylcitrate cycle"/>
    <property type="evidence" value="ECO:0007669"/>
    <property type="project" value="InterPro"/>
</dbReference>
<dbReference type="GO" id="GO:0006099">
    <property type="term" value="P:tricarboxylic acid cycle"/>
    <property type="evidence" value="ECO:0007669"/>
    <property type="project" value="UniProtKB-UniPathway"/>
</dbReference>
<dbReference type="FunFam" id="1.10.4100.10:FF:000001">
    <property type="entry name" value="2-methylcitrate dehydratase"/>
    <property type="match status" value="1"/>
</dbReference>
<dbReference type="FunFam" id="3.30.1330.120:FF:000001">
    <property type="entry name" value="2-methylcitrate dehydratase"/>
    <property type="match status" value="1"/>
</dbReference>
<dbReference type="Gene3D" id="1.10.4100.10">
    <property type="entry name" value="2-methylcitrate dehydratase PrpD"/>
    <property type="match status" value="1"/>
</dbReference>
<dbReference type="Gene3D" id="3.30.1330.120">
    <property type="entry name" value="2-methylcitrate dehydratase PrpD"/>
    <property type="match status" value="1"/>
</dbReference>
<dbReference type="InterPro" id="IPR012705">
    <property type="entry name" value="2Me_IsoCit_deHydtase_PrpD"/>
</dbReference>
<dbReference type="InterPro" id="IPR036148">
    <property type="entry name" value="MmgE/PrpD_sf"/>
</dbReference>
<dbReference type="InterPro" id="IPR042183">
    <property type="entry name" value="MmgE/PrpD_sf_1"/>
</dbReference>
<dbReference type="InterPro" id="IPR042188">
    <property type="entry name" value="MmgE/PrpD_sf_2"/>
</dbReference>
<dbReference type="InterPro" id="IPR005656">
    <property type="entry name" value="MmgE_PrpD"/>
</dbReference>
<dbReference type="InterPro" id="IPR045337">
    <property type="entry name" value="MmgE_PrpD_C"/>
</dbReference>
<dbReference type="InterPro" id="IPR045336">
    <property type="entry name" value="MmgE_PrpD_N"/>
</dbReference>
<dbReference type="NCBIfam" id="NF006943">
    <property type="entry name" value="PRK09425.1"/>
    <property type="match status" value="1"/>
</dbReference>
<dbReference type="NCBIfam" id="TIGR02330">
    <property type="entry name" value="prpD"/>
    <property type="match status" value="1"/>
</dbReference>
<dbReference type="PANTHER" id="PTHR16943:SF8">
    <property type="entry name" value="2-METHYLCITRATE DEHYDRATASE"/>
    <property type="match status" value="1"/>
</dbReference>
<dbReference type="PANTHER" id="PTHR16943">
    <property type="entry name" value="2-METHYLCITRATE DEHYDRATASE-RELATED"/>
    <property type="match status" value="1"/>
</dbReference>
<dbReference type="Pfam" id="PF19305">
    <property type="entry name" value="MmgE_PrpD_C"/>
    <property type="match status" value="1"/>
</dbReference>
<dbReference type="Pfam" id="PF03972">
    <property type="entry name" value="MmgE_PrpD_N"/>
    <property type="match status" value="1"/>
</dbReference>
<dbReference type="SUPFAM" id="SSF103378">
    <property type="entry name" value="2-methylcitrate dehydratase PrpD"/>
    <property type="match status" value="1"/>
</dbReference>
<evidence type="ECO:0000250" key="1">
    <source>
        <dbReference type="UniProtKB" id="P74840"/>
    </source>
</evidence>
<evidence type="ECO:0000250" key="2">
    <source>
        <dbReference type="UniProtKB" id="P77243"/>
    </source>
</evidence>
<evidence type="ECO:0000305" key="3"/>
<evidence type="ECO:0007829" key="4">
    <source>
        <dbReference type="PDB" id="5MVI"/>
    </source>
</evidence>
<feature type="chain" id="PRO_0000215025" description="2-methylcitrate dehydratase">
    <location>
        <begin position="1"/>
        <end position="483"/>
    </location>
</feature>
<feature type="sequence conflict" description="In Ref. 2; AAO70082." evidence="3" ref="2">
    <original>L</original>
    <variation>P</variation>
    <location>
        <position position="452"/>
    </location>
</feature>
<feature type="helix" evidence="4">
    <location>
        <begin position="14"/>
        <end position="25"/>
    </location>
</feature>
<feature type="helix" evidence="4">
    <location>
        <begin position="31"/>
        <end position="51"/>
    </location>
</feature>
<feature type="helix" evidence="4">
    <location>
        <begin position="55"/>
        <end position="58"/>
    </location>
</feature>
<feature type="helix" evidence="4">
    <location>
        <begin position="85"/>
        <end position="97"/>
    </location>
</feature>
<feature type="strand" evidence="4">
    <location>
        <begin position="104"/>
        <end position="111"/>
    </location>
</feature>
<feature type="helix" evidence="4">
    <location>
        <begin position="113"/>
        <end position="116"/>
    </location>
</feature>
<feature type="helix" evidence="4">
    <location>
        <begin position="117"/>
        <end position="133"/>
    </location>
</feature>
<feature type="helix" evidence="4">
    <location>
        <begin position="141"/>
        <end position="159"/>
    </location>
</feature>
<feature type="helix" evidence="4">
    <location>
        <begin position="165"/>
        <end position="167"/>
    </location>
</feature>
<feature type="helix" evidence="4">
    <location>
        <begin position="173"/>
        <end position="186"/>
    </location>
</feature>
<feature type="helix" evidence="4">
    <location>
        <begin position="191"/>
        <end position="203"/>
    </location>
</feature>
<feature type="helix" evidence="4">
    <location>
        <begin position="210"/>
        <end position="212"/>
    </location>
</feature>
<feature type="helix" evidence="4">
    <location>
        <begin position="220"/>
        <end position="239"/>
    </location>
</feature>
<feature type="turn" evidence="4">
    <location>
        <begin position="240"/>
        <end position="242"/>
    </location>
</feature>
<feature type="turn" evidence="4">
    <location>
        <begin position="247"/>
        <end position="251"/>
    </location>
</feature>
<feature type="turn" evidence="4">
    <location>
        <begin position="253"/>
        <end position="255"/>
    </location>
</feature>
<feature type="helix" evidence="4">
    <location>
        <begin position="257"/>
        <end position="261"/>
    </location>
</feature>
<feature type="helix" evidence="4">
    <location>
        <begin position="276"/>
        <end position="279"/>
    </location>
</feature>
<feature type="helix" evidence="4">
    <location>
        <begin position="291"/>
        <end position="293"/>
    </location>
</feature>
<feature type="helix" evidence="4">
    <location>
        <begin position="295"/>
        <end position="302"/>
    </location>
</feature>
<feature type="turn" evidence="4">
    <location>
        <begin position="303"/>
        <end position="306"/>
    </location>
</feature>
<feature type="strand" evidence="4">
    <location>
        <begin position="320"/>
        <end position="324"/>
    </location>
</feature>
<feature type="helix" evidence="4">
    <location>
        <begin position="326"/>
        <end position="331"/>
    </location>
</feature>
<feature type="helix" evidence="4">
    <location>
        <begin position="341"/>
        <end position="344"/>
    </location>
</feature>
<feature type="helix" evidence="4">
    <location>
        <begin position="348"/>
        <end position="358"/>
    </location>
</feature>
<feature type="turn" evidence="4">
    <location>
        <begin position="363"/>
        <end position="366"/>
    </location>
</feature>
<feature type="helix" evidence="4">
    <location>
        <begin position="368"/>
        <end position="371"/>
    </location>
</feature>
<feature type="helix" evidence="4">
    <location>
        <begin position="374"/>
        <end position="379"/>
    </location>
</feature>
<feature type="strand" evidence="4">
    <location>
        <begin position="382"/>
        <end position="387"/>
    </location>
</feature>
<feature type="helix" evidence="4">
    <location>
        <begin position="389"/>
        <end position="396"/>
    </location>
</feature>
<feature type="turn" evidence="4">
    <location>
        <begin position="398"/>
        <end position="400"/>
    </location>
</feature>
<feature type="strand" evidence="4">
    <location>
        <begin position="405"/>
        <end position="410"/>
    </location>
</feature>
<feature type="strand" evidence="4">
    <location>
        <begin position="416"/>
        <end position="421"/>
    </location>
</feature>
<feature type="helix" evidence="4">
    <location>
        <begin position="432"/>
        <end position="448"/>
    </location>
</feature>
<feature type="helix" evidence="4">
    <location>
        <begin position="453"/>
        <end position="463"/>
    </location>
</feature>
<feature type="helix" evidence="4">
    <location>
        <begin position="466"/>
        <end position="469"/>
    </location>
</feature>
<feature type="helix" evidence="4">
    <location>
        <begin position="474"/>
        <end position="479"/>
    </location>
</feature>
<protein>
    <recommendedName>
        <fullName evidence="1">2-methylcitrate dehydratase</fullName>
        <shortName evidence="1">2-MC dehydratase</shortName>
        <ecNumber evidence="1">4.2.1.79</ecNumber>
    </recommendedName>
    <alternativeName>
        <fullName evidence="1">Aconitate hydratase</fullName>
        <shortName evidence="1">ACN</shortName>
        <shortName evidence="1">Aconitase</shortName>
        <ecNumber evidence="1">4.2.1.3</ecNumber>
    </alternativeName>
</protein>
<name>PRPD_SALTI</name>
<sequence>MSAHISNVRPDFDREIVDIVDYVMNYEITSKVAYDTAHYCLLDTLGCGLEALEYPACKKLLGPIVPGTVVPNGARVPGTQFQLDPVQAAFNISAMIRWLDFNDTWLAAEWGHPSDNLGGILATADWLSRNAVAAGKAPLTMKQVLSGMIKAHEIQGCIALENAFNRVGLDHVLLVKVASTAVVAEMLGLTRDEILNAVSLAWVDGQSLRTYRHAPNTGTRKSWAAGDATSRAVRLALMAKTGEMGYPSALTAKTWGFYDVSFKGETFRFQRPYGSYVMENVLFKISFPAEFHSQTAVEAAMTLYEQMQAAGKTAADIEKVTIRTHEACLRIIDKKGPLNNPADRDHCIQYMVAVPLLFGRLTAADYEDEVAQDKRIDALREKIVCYEDPAFTADYHDPEKRAIGNAITVEFTDGSRFGEVVVEYPIGHARRRADGIPKLIEKFKINLARQFLTRQQQRILDVSLDRARLEQMPVNEYLDLYII</sequence>